<evidence type="ECO:0000269" key="1">
    <source>
    </source>
</evidence>
<evidence type="ECO:0000269" key="2">
    <source>
    </source>
</evidence>
<evidence type="ECO:0000269" key="3">
    <source>
    </source>
</evidence>
<evidence type="ECO:0000303" key="4">
    <source>
    </source>
</evidence>
<evidence type="ECO:0000303" key="5">
    <source>
    </source>
</evidence>
<evidence type="ECO:0000305" key="6"/>
<evidence type="ECO:0000305" key="7">
    <source>
    </source>
</evidence>
<accession>P54534</accession>
<reference key="1">
    <citation type="journal article" date="1996" name="Microbiology">
        <title>Systematic sequencing of the 283 kb 210 degrees-232 degrees region of the Bacillus subtilis genome containing the skin element and many sporulation genes.</title>
        <authorList>
            <person name="Mizuno M."/>
            <person name="Masuda S."/>
            <person name="Takemaru K."/>
            <person name="Hosono S."/>
            <person name="Sato T."/>
            <person name="Takeuchi M."/>
            <person name="Kobayashi Y."/>
        </authorList>
    </citation>
    <scope>NUCLEOTIDE SEQUENCE [GENOMIC DNA]</scope>
    <source>
        <strain>168 / JH642</strain>
    </source>
</reference>
<reference key="2">
    <citation type="journal article" date="1997" name="Nature">
        <title>The complete genome sequence of the Gram-positive bacterium Bacillus subtilis.</title>
        <authorList>
            <person name="Kunst F."/>
            <person name="Ogasawara N."/>
            <person name="Moszer I."/>
            <person name="Albertini A.M."/>
            <person name="Alloni G."/>
            <person name="Azevedo V."/>
            <person name="Bertero M.G."/>
            <person name="Bessieres P."/>
            <person name="Bolotin A."/>
            <person name="Borchert S."/>
            <person name="Borriss R."/>
            <person name="Boursier L."/>
            <person name="Brans A."/>
            <person name="Braun M."/>
            <person name="Brignell S.C."/>
            <person name="Bron S."/>
            <person name="Brouillet S."/>
            <person name="Bruschi C.V."/>
            <person name="Caldwell B."/>
            <person name="Capuano V."/>
            <person name="Carter N.M."/>
            <person name="Choi S.-K."/>
            <person name="Codani J.-J."/>
            <person name="Connerton I.F."/>
            <person name="Cummings N.J."/>
            <person name="Daniel R.A."/>
            <person name="Denizot F."/>
            <person name="Devine K.M."/>
            <person name="Duesterhoeft A."/>
            <person name="Ehrlich S.D."/>
            <person name="Emmerson P.T."/>
            <person name="Entian K.-D."/>
            <person name="Errington J."/>
            <person name="Fabret C."/>
            <person name="Ferrari E."/>
            <person name="Foulger D."/>
            <person name="Fritz C."/>
            <person name="Fujita M."/>
            <person name="Fujita Y."/>
            <person name="Fuma S."/>
            <person name="Galizzi A."/>
            <person name="Galleron N."/>
            <person name="Ghim S.-Y."/>
            <person name="Glaser P."/>
            <person name="Goffeau A."/>
            <person name="Golightly E.J."/>
            <person name="Grandi G."/>
            <person name="Guiseppi G."/>
            <person name="Guy B.J."/>
            <person name="Haga K."/>
            <person name="Haiech J."/>
            <person name="Harwood C.R."/>
            <person name="Henaut A."/>
            <person name="Hilbert H."/>
            <person name="Holsappel S."/>
            <person name="Hosono S."/>
            <person name="Hullo M.-F."/>
            <person name="Itaya M."/>
            <person name="Jones L.-M."/>
            <person name="Joris B."/>
            <person name="Karamata D."/>
            <person name="Kasahara Y."/>
            <person name="Klaerr-Blanchard M."/>
            <person name="Klein C."/>
            <person name="Kobayashi Y."/>
            <person name="Koetter P."/>
            <person name="Koningstein G."/>
            <person name="Krogh S."/>
            <person name="Kumano M."/>
            <person name="Kurita K."/>
            <person name="Lapidus A."/>
            <person name="Lardinois S."/>
            <person name="Lauber J."/>
            <person name="Lazarevic V."/>
            <person name="Lee S.-M."/>
            <person name="Levine A."/>
            <person name="Liu H."/>
            <person name="Masuda S."/>
            <person name="Mauel C."/>
            <person name="Medigue C."/>
            <person name="Medina N."/>
            <person name="Mellado R.P."/>
            <person name="Mizuno M."/>
            <person name="Moestl D."/>
            <person name="Nakai S."/>
            <person name="Noback M."/>
            <person name="Noone D."/>
            <person name="O'Reilly M."/>
            <person name="Ogawa K."/>
            <person name="Ogiwara A."/>
            <person name="Oudega B."/>
            <person name="Park S.-H."/>
            <person name="Parro V."/>
            <person name="Pohl T.M."/>
            <person name="Portetelle D."/>
            <person name="Porwollik S."/>
            <person name="Prescott A.M."/>
            <person name="Presecan E."/>
            <person name="Pujic P."/>
            <person name="Purnelle B."/>
            <person name="Rapoport G."/>
            <person name="Rey M."/>
            <person name="Reynolds S."/>
            <person name="Rieger M."/>
            <person name="Rivolta C."/>
            <person name="Rocha E."/>
            <person name="Roche B."/>
            <person name="Rose M."/>
            <person name="Sadaie Y."/>
            <person name="Sato T."/>
            <person name="Scanlan E."/>
            <person name="Schleich S."/>
            <person name="Schroeter R."/>
            <person name="Scoffone F."/>
            <person name="Sekiguchi J."/>
            <person name="Sekowska A."/>
            <person name="Seror S.J."/>
            <person name="Serror P."/>
            <person name="Shin B.-S."/>
            <person name="Soldo B."/>
            <person name="Sorokin A."/>
            <person name="Tacconi E."/>
            <person name="Takagi T."/>
            <person name="Takahashi H."/>
            <person name="Takemaru K."/>
            <person name="Takeuchi M."/>
            <person name="Tamakoshi A."/>
            <person name="Tanaka T."/>
            <person name="Terpstra P."/>
            <person name="Tognoni A."/>
            <person name="Tosato V."/>
            <person name="Uchiyama S."/>
            <person name="Vandenbol M."/>
            <person name="Vannier F."/>
            <person name="Vassarotti A."/>
            <person name="Viari A."/>
            <person name="Wambutt R."/>
            <person name="Wedler E."/>
            <person name="Wedler H."/>
            <person name="Weitzenegger T."/>
            <person name="Winters P."/>
            <person name="Wipat A."/>
            <person name="Yamamoto H."/>
            <person name="Yamane K."/>
            <person name="Yasumoto K."/>
            <person name="Yata K."/>
            <person name="Yoshida K."/>
            <person name="Yoshikawa H.-F."/>
            <person name="Zumstein E."/>
            <person name="Yoshikawa H."/>
            <person name="Danchin A."/>
        </authorList>
    </citation>
    <scope>NUCLEOTIDE SEQUENCE [LARGE SCALE GENOMIC DNA]</scope>
    <source>
        <strain>168</strain>
    </source>
</reference>
<reference key="3">
    <citation type="journal article" date="1994" name="J. Biol. Chem.">
        <title>A protein that activates expression of a multidrug efflux transporter upon binding the transporter substrates.</title>
        <authorList>
            <person name="Ahmed M."/>
            <person name="Borsch C.M."/>
            <person name="Taylor S.S."/>
            <person name="Vazquez-Laslop N."/>
            <person name="Neyfakh A.A."/>
        </authorList>
    </citation>
    <scope>NUCLEOTIDE SEQUENCE [GENOMIC DNA] OF 1-21</scope>
    <source>
        <strain>168 / Marburg / ATCC 6051 / DSM 10 / JCM 1465 / NBRC 13719 / NCIMB 3610 / NRRL NRS-744 / VKM B-501</strain>
    </source>
</reference>
<reference key="4">
    <citation type="journal article" date="2014" name="Antioxid. Redox Signal.">
        <title>Redox regulation in Bacillus subtilis: The bacilliredoxins BrxA(YphP) and BrxB(YqiW) function in de-bacillithiolation of S-bacillithiolated OhrR and MetE.</title>
        <authorList>
            <person name="Gaballa A."/>
            <person name="Chi B.K."/>
            <person name="Roberts A.A."/>
            <person name="Becher D."/>
            <person name="Hamilton C.J."/>
            <person name="Antelmann H."/>
            <person name="Helmann J.D."/>
        </authorList>
    </citation>
    <scope>PROTEIN SEQUENCE OF 42-60</scope>
    <scope>FUNCTION</scope>
    <scope>INDUCTION</scope>
    <scope>PTM</scope>
    <scope>IDENTIFICATION BY MASS SPECTROMETRY</scope>
    <scope>DISRUPTION PHENOTYPE</scope>
    <scope>MOTIF</scope>
    <scope>ACTIVE SITE</scope>
    <scope>POST-TRANSLATIONAL MODIFICATION AT CYS-52</scope>
    <scope>DISULFIDE BOND</scope>
    <scope>MUTAGENESIS OF CYS-52 AND CYS-54</scope>
</reference>
<reference key="5">
    <citation type="journal article" date="2021" name="Redox Biol.">
        <title>The Bacillus subtilis monothiol bacilliredoxin BrxC (YtxJ) and the Bdr (YpdA) disulfide reductase reduce S-bacillithiolated proteins.</title>
        <authorList>
            <person name="Gaballa A."/>
            <person name="Su T.T."/>
            <person name="Helmann J.D."/>
        </authorList>
    </citation>
    <scope>FUNCTION</scope>
    <scope>INTERACTION WITH BRXC</scope>
    <scope>PTM</scope>
    <scope>IDENTIFICATION BY MASS SPECTROMETRY</scope>
    <source>
        <strain evidence="5">168 / CU1065</strain>
    </source>
</reference>
<proteinExistence type="evidence at protein level"/>
<dbReference type="EMBL" id="D84432">
    <property type="protein sequence ID" value="BAA12603.1"/>
    <property type="molecule type" value="Genomic_DNA"/>
</dbReference>
<dbReference type="EMBL" id="AL009126">
    <property type="protein sequence ID" value="CAB14330.1"/>
    <property type="molecule type" value="Genomic_DNA"/>
</dbReference>
<dbReference type="EMBL" id="L25604">
    <property type="status" value="NOT_ANNOTATED_CDS"/>
    <property type="molecule type" value="Genomic_DNA"/>
</dbReference>
<dbReference type="PIR" id="E69962">
    <property type="entry name" value="E69962"/>
</dbReference>
<dbReference type="RefSeq" id="NP_390279.1">
    <property type="nucleotide sequence ID" value="NC_000964.3"/>
</dbReference>
<dbReference type="RefSeq" id="WP_003226477.1">
    <property type="nucleotide sequence ID" value="NZ_OZ025638.1"/>
</dbReference>
<dbReference type="SMR" id="P54534"/>
<dbReference type="FunCoup" id="P54534">
    <property type="interactions" value="14"/>
</dbReference>
<dbReference type="STRING" id="224308.BSU23990"/>
<dbReference type="jPOST" id="P54534"/>
<dbReference type="PaxDb" id="224308-BSU23990"/>
<dbReference type="EnsemblBacteria" id="CAB14330">
    <property type="protein sequence ID" value="CAB14330"/>
    <property type="gene ID" value="BSU_23990"/>
</dbReference>
<dbReference type="GeneID" id="76978805"/>
<dbReference type="GeneID" id="938683"/>
<dbReference type="KEGG" id="bsu:BSU23990"/>
<dbReference type="PATRIC" id="fig|224308.179.peg.2613"/>
<dbReference type="eggNOG" id="ENOG502ZBVN">
    <property type="taxonomic scope" value="Bacteria"/>
</dbReference>
<dbReference type="InParanoid" id="P54534"/>
<dbReference type="OrthoDB" id="9793981at2"/>
<dbReference type="PhylomeDB" id="P54534"/>
<dbReference type="BioCyc" id="BSUB:BSU23990-MONOMER"/>
<dbReference type="PRO" id="PR:P54534"/>
<dbReference type="Proteomes" id="UP000001570">
    <property type="component" value="Chromosome"/>
</dbReference>
<dbReference type="GO" id="GO:0016491">
    <property type="term" value="F:oxidoreductase activity"/>
    <property type="evidence" value="ECO:0007669"/>
    <property type="project" value="UniProtKB-KW"/>
</dbReference>
<dbReference type="GO" id="GO:0045454">
    <property type="term" value="P:cell redox homeostasis"/>
    <property type="evidence" value="ECO:0000315"/>
    <property type="project" value="UniProtKB"/>
</dbReference>
<dbReference type="GO" id="GO:0033194">
    <property type="term" value="P:response to hydroperoxide"/>
    <property type="evidence" value="ECO:0000315"/>
    <property type="project" value="UniProtKB"/>
</dbReference>
<dbReference type="GO" id="GO:0006979">
    <property type="term" value="P:response to oxidative stress"/>
    <property type="evidence" value="ECO:0000315"/>
    <property type="project" value="UniProtKB"/>
</dbReference>
<dbReference type="Gene3D" id="3.40.30.10">
    <property type="entry name" value="Glutaredoxin"/>
    <property type="match status" value="1"/>
</dbReference>
<dbReference type="InterPro" id="IPR009474">
    <property type="entry name" value="BrxB/BrxA"/>
</dbReference>
<dbReference type="NCBIfam" id="TIGR04191">
    <property type="entry name" value="YphP_YqiW"/>
    <property type="match status" value="1"/>
</dbReference>
<dbReference type="PANTHER" id="PTHR40052:SF1">
    <property type="entry name" value="BACILLIREDOXIN BRXB"/>
    <property type="match status" value="1"/>
</dbReference>
<dbReference type="PANTHER" id="PTHR40052">
    <property type="entry name" value="UPF0403 PROTEIN YQIW-RELATED"/>
    <property type="match status" value="1"/>
</dbReference>
<dbReference type="Pfam" id="PF06491">
    <property type="entry name" value="Disulph_isomer"/>
    <property type="match status" value="1"/>
</dbReference>
<gene>
    <name evidence="4" type="primary">brxB</name>
    <name evidence="4" type="synonym">yqiW</name>
    <name type="ordered locus">BSU23990</name>
</gene>
<protein>
    <recommendedName>
        <fullName evidence="4">Bacilliredoxin BrxB</fullName>
        <shortName evidence="4">Brx-B</shortName>
    </recommendedName>
    <alternativeName>
        <fullName evidence="6">Bacilliredoxin YqiW</fullName>
    </alternativeName>
    <alternativeName>
        <fullName evidence="4">Dithiol bacilliredoxin</fullName>
    </alternativeName>
</protein>
<feature type="chain" id="PRO_0000049827" description="Bacilliredoxin BrxB">
    <location>
        <begin position="1"/>
        <end position="145"/>
    </location>
</feature>
<feature type="short sequence motif" description="CXC active site motif" evidence="1">
    <location>
        <begin position="52"/>
        <end position="54"/>
    </location>
</feature>
<feature type="active site" description="Nucleophile" evidence="1">
    <location>
        <position position="52"/>
    </location>
</feature>
<feature type="active site" description="Nucleophile" evidence="1">
    <location>
        <position position="54"/>
    </location>
</feature>
<feature type="modified residue" description="S-bacillithiol cysteine disulfide" evidence="1">
    <location>
        <position position="52"/>
    </location>
</feature>
<feature type="disulfide bond" description="Redox-active" evidence="1">
    <location>
        <begin position="52"/>
        <end position="54"/>
    </location>
</feature>
<feature type="mutagenesis site" description="Loss of debacillithiolation of the S-bacillithiolated OhrR (OhrR-SSB) by the NaBH(4)-reduced form of this protein in vitro. Loss of regeneration of active OhrR with DNA-binding activity in vitro. Loss of debacillithiolation of in vivo NaOCl-generated S-bacillithiolated MetE (MetE-SSB)." evidence="1">
    <original>C</original>
    <variation>A</variation>
    <location>
        <position position="52"/>
    </location>
</feature>
<feature type="mutagenesis site" description="Accumulation of S-bacillithiolated form due to lack of this resolving cysteine residue. Debacillithiolation of the S-bacillithiolated OhrR (OhrR-SSB) without the prior NaBH(4) reduction of this protein in vitro. Regenerates active OhrR with DNA-binding activity, but unable to activate the S-cysteinyl cysteine modified form of OhrR (OhrR-SSCys) in vitro. Debacillithiolation of in vivo NaOCl-generated S-bacillithiolated MetE (MetE-SSB)." evidence="1">
    <original>C</original>
    <variation>A</variation>
    <location>
        <position position="54"/>
    </location>
</feature>
<comment type="function">
    <text evidence="1 2">S-bacillithiolation is the formation of mixed disulfide bonds between protein thiols and the general thiol reductant bacillithiol (BSH) under oxidative stress. BSH is an equivalent of glutathione (GSH) in Firmicutes. This protein is a dithiol bacilliredoxin, which debacillithiolates (removes BSH) the S-bacillithiolated OhrR (OhrR-SSB) in vitro and in vivo NaOCl-generated S-bacillithiolated MetE (MetE-SSB). Involved in maintaining redox homeostasis in response to disulfide stress conditions.</text>
</comment>
<comment type="subunit">
    <text evidence="2">Interacts with BrxC.</text>
</comment>
<comment type="induction">
    <text evidence="1">Expression is up-regulated by cumene hydroperoxide (CHP).</text>
</comment>
<comment type="PTM">
    <text evidence="1 2">N-terminal Cys of the CXC active site motif can react with bacillithiol (BSH) to form mixed disulfides. S-bacillithiolation protects Cys residues against overoxidation by acting as a redox switch in response to oxidative stress.</text>
</comment>
<comment type="disruption phenotype">
    <text evidence="3">Sensitive to cumene hydroperoxide (CHP) as indicated by growth inhibition assay. No effect on growth after NaOCl treatment.</text>
</comment>
<comment type="similarity">
    <text evidence="7">Belongs to the bacilliredoxin family.</text>
</comment>
<keyword id="KW-0903">Direct protein sequencing</keyword>
<keyword id="KW-1015">Disulfide bond</keyword>
<keyword id="KW-0560">Oxidoreductase</keyword>
<keyword id="KW-0676">Redox-active center</keyword>
<keyword id="KW-1185">Reference proteome</keyword>
<organism>
    <name type="scientific">Bacillus subtilis (strain 168)</name>
    <dbReference type="NCBI Taxonomy" id="224308"/>
    <lineage>
        <taxon>Bacteria</taxon>
        <taxon>Bacillati</taxon>
        <taxon>Bacillota</taxon>
        <taxon>Bacilli</taxon>
        <taxon>Bacillales</taxon>
        <taxon>Bacillaceae</taxon>
        <taxon>Bacillus</taxon>
    </lineage>
</organism>
<sequence>MNMDFNLFMNDIVRQARQEITAAGYTELKTAEEVDEALTKKGTTLVMVNSVCGCAGGIARPAAYHSVHYDKRPDQLVTVFAGQDKEATARARDYFEGYPPSSPSFAILKDGKIMKMVERHEIEGHEPMAVVAKLQEAFEEYCEEV</sequence>
<name>BRXB_BACSU</name>